<reference key="1">
    <citation type="submission" date="2003-02" db="EMBL/GenBank/DDBJ databases">
        <title>Complete nucleotide sequence of Pinus koraiensis.</title>
        <authorList>
            <person name="Noh E.W."/>
            <person name="Lee J.S."/>
            <person name="Choi Y.I."/>
            <person name="Han M.S."/>
            <person name="Yi Y.S."/>
            <person name="Han S.U."/>
        </authorList>
    </citation>
    <scope>NUCLEOTIDE SEQUENCE [LARGE SCALE GENOMIC DNA]</scope>
    <source>
        <strain>KangWon16</strain>
    </source>
</reference>
<dbReference type="EMBL" id="AY228468">
    <property type="protein sequence ID" value="AAO74016.1"/>
    <property type="molecule type" value="Genomic_DNA"/>
</dbReference>
<dbReference type="RefSeq" id="NP_817167.1">
    <property type="nucleotide sequence ID" value="NC_004677.2"/>
</dbReference>
<dbReference type="SMR" id="Q85X47"/>
<dbReference type="GeneID" id="806905"/>
<dbReference type="GO" id="GO:0009535">
    <property type="term" value="C:chloroplast thylakoid membrane"/>
    <property type="evidence" value="ECO:0007669"/>
    <property type="project" value="UniProtKB-SubCell"/>
</dbReference>
<dbReference type="GO" id="GO:0009523">
    <property type="term" value="C:photosystem II"/>
    <property type="evidence" value="ECO:0007669"/>
    <property type="project" value="UniProtKB-KW"/>
</dbReference>
<dbReference type="GO" id="GO:0019684">
    <property type="term" value="P:photosynthesis, light reaction"/>
    <property type="evidence" value="ECO:0007669"/>
    <property type="project" value="InterPro"/>
</dbReference>
<dbReference type="HAMAP" id="MF_00438">
    <property type="entry name" value="PSII_PsbM"/>
    <property type="match status" value="1"/>
</dbReference>
<dbReference type="InterPro" id="IPR007826">
    <property type="entry name" value="PSII_PsbM"/>
</dbReference>
<dbReference type="InterPro" id="IPR037269">
    <property type="entry name" value="PSII_PsbM_sf"/>
</dbReference>
<dbReference type="NCBIfam" id="TIGR03038">
    <property type="entry name" value="PS_II_psbM"/>
    <property type="match status" value="1"/>
</dbReference>
<dbReference type="PANTHER" id="PTHR35774">
    <property type="entry name" value="PHOTOSYSTEM II REACTION CENTER PROTEIN M"/>
    <property type="match status" value="1"/>
</dbReference>
<dbReference type="PANTHER" id="PTHR35774:SF1">
    <property type="entry name" value="PHOTOSYSTEM II REACTION CENTER PROTEIN M"/>
    <property type="match status" value="1"/>
</dbReference>
<dbReference type="Pfam" id="PF05151">
    <property type="entry name" value="PsbM"/>
    <property type="match status" value="1"/>
</dbReference>
<dbReference type="SUPFAM" id="SSF161033">
    <property type="entry name" value="Photosystem II reaction center protein M, PsbM"/>
    <property type="match status" value="1"/>
</dbReference>
<accession>Q85X47</accession>
<name>PSBM_PINKO</name>
<evidence type="ECO:0000255" key="1">
    <source>
        <dbReference type="HAMAP-Rule" id="MF_00438"/>
    </source>
</evidence>
<keyword id="KW-0150">Chloroplast</keyword>
<keyword id="KW-0472">Membrane</keyword>
<keyword id="KW-0602">Photosynthesis</keyword>
<keyword id="KW-0604">Photosystem II</keyword>
<keyword id="KW-0934">Plastid</keyword>
<keyword id="KW-0674">Reaction center</keyword>
<keyword id="KW-0793">Thylakoid</keyword>
<keyword id="KW-0812">Transmembrane</keyword>
<keyword id="KW-1133">Transmembrane helix</keyword>
<feature type="chain" id="PRO_0000217572" description="Photosystem II reaction center protein M">
    <location>
        <begin position="1"/>
        <end position="37"/>
    </location>
</feature>
<feature type="transmembrane region" description="Helical" evidence="1">
    <location>
        <begin position="7"/>
        <end position="27"/>
    </location>
</feature>
<protein>
    <recommendedName>
        <fullName evidence="1">Photosystem II reaction center protein M</fullName>
        <shortName evidence="1">PSII-M</shortName>
    </recommendedName>
</protein>
<proteinExistence type="inferred from homology"/>
<gene>
    <name evidence="1" type="primary">psbM</name>
</gene>
<sequence length="37" mass="3902">MEVNNLGFIAVLMFLAIPTAFLLIPYVKTASASSGSN</sequence>
<comment type="function">
    <text evidence="1">One of the components of the core complex of photosystem II (PSII). PSII is a light-driven water:plastoquinone oxidoreductase that uses light energy to abstract electrons from H(2)O, generating O(2) and a proton gradient subsequently used for ATP formation. It consists of a core antenna complex that captures photons, and an electron transfer chain that converts photonic excitation into a charge separation. This subunit is found at the monomer-monomer interface.</text>
</comment>
<comment type="subunit">
    <text evidence="1">PSII is composed of 1 copy each of membrane proteins PsbA, PsbB, PsbC, PsbD, PsbE, PsbF, PsbH, PsbI, PsbJ, PsbK, PsbL, PsbM, PsbT, PsbX, PsbY, PsbZ, Psb30/Ycf12, at least 3 peripheral proteins of the oxygen-evolving complex and a large number of cofactors. It forms dimeric complexes.</text>
</comment>
<comment type="subcellular location">
    <subcellularLocation>
        <location evidence="1">Plastid</location>
        <location evidence="1">Chloroplast thylakoid membrane</location>
        <topology evidence="1">Single-pass membrane protein</topology>
    </subcellularLocation>
</comment>
<comment type="similarity">
    <text evidence="1">Belongs to the PsbM family.</text>
</comment>
<geneLocation type="chloroplast"/>
<organism>
    <name type="scientific">Pinus koraiensis</name>
    <name type="common">Korean pine</name>
    <dbReference type="NCBI Taxonomy" id="88728"/>
    <lineage>
        <taxon>Eukaryota</taxon>
        <taxon>Viridiplantae</taxon>
        <taxon>Streptophyta</taxon>
        <taxon>Embryophyta</taxon>
        <taxon>Tracheophyta</taxon>
        <taxon>Spermatophyta</taxon>
        <taxon>Pinopsida</taxon>
        <taxon>Pinidae</taxon>
        <taxon>Conifers I</taxon>
        <taxon>Pinales</taxon>
        <taxon>Pinaceae</taxon>
        <taxon>Pinus</taxon>
        <taxon>Pinus subgen. Strobus</taxon>
    </lineage>
</organism>